<name>RSC9_SCHPO</name>
<protein>
    <recommendedName>
        <fullName>Chromatin structure-remodeling complex subunit rsc9</fullName>
    </recommendedName>
    <alternativeName>
        <fullName>RSC complex subunit rsc9</fullName>
    </alternativeName>
    <alternativeName>
        <fullName>Remodel the structure of chromatin complex subunit 9</fullName>
    </alternativeName>
</protein>
<organism>
    <name type="scientific">Schizosaccharomyces pombe (strain 972 / ATCC 24843)</name>
    <name type="common">Fission yeast</name>
    <dbReference type="NCBI Taxonomy" id="284812"/>
    <lineage>
        <taxon>Eukaryota</taxon>
        <taxon>Fungi</taxon>
        <taxon>Dikarya</taxon>
        <taxon>Ascomycota</taxon>
        <taxon>Taphrinomycotina</taxon>
        <taxon>Schizosaccharomycetes</taxon>
        <taxon>Schizosaccharomycetales</taxon>
        <taxon>Schizosaccharomycetaceae</taxon>
        <taxon>Schizosaccharomyces</taxon>
    </lineage>
</organism>
<accession>Q9P7W8</accession>
<dbReference type="EMBL" id="CU329671">
    <property type="protein sequence ID" value="CAB66446.1"/>
    <property type="molecule type" value="Genomic_DNA"/>
</dbReference>
<dbReference type="PIR" id="T50315">
    <property type="entry name" value="T50315"/>
</dbReference>
<dbReference type="RefSeq" id="NP_596197.1">
    <property type="nucleotide sequence ID" value="NM_001022116.2"/>
</dbReference>
<dbReference type="BioGRID" id="276492">
    <property type="interactions" value="6"/>
</dbReference>
<dbReference type="ComplexPortal" id="CPX-6363">
    <property type="entry name" value="RSC chromatin remodelling complex"/>
</dbReference>
<dbReference type="DIP" id="DIP-48390N"/>
<dbReference type="FunCoup" id="Q9P7W8">
    <property type="interactions" value="18"/>
</dbReference>
<dbReference type="IntAct" id="Q9P7W8">
    <property type="interactions" value="6"/>
</dbReference>
<dbReference type="STRING" id="284812.Q9P7W8"/>
<dbReference type="iPTMnet" id="Q9P7W8"/>
<dbReference type="PaxDb" id="4896-SPBC1703.02.1"/>
<dbReference type="EnsemblFungi" id="SPBC1703.02.1">
    <property type="protein sequence ID" value="SPBC1703.02.1:pep"/>
    <property type="gene ID" value="SPBC1703.02"/>
</dbReference>
<dbReference type="GeneID" id="2539948"/>
<dbReference type="KEGG" id="spo:2539948"/>
<dbReference type="PomBase" id="SPBC1703.02">
    <property type="gene designation" value="rsc9"/>
</dbReference>
<dbReference type="VEuPathDB" id="FungiDB:SPBC1703.02"/>
<dbReference type="eggNOG" id="ENOG502QVTM">
    <property type="taxonomic scope" value="Eukaryota"/>
</dbReference>
<dbReference type="HOGENOM" id="CLU_008152_1_0_1"/>
<dbReference type="InParanoid" id="Q9P7W8"/>
<dbReference type="OMA" id="DKYKFDS"/>
<dbReference type="PhylomeDB" id="Q9P7W8"/>
<dbReference type="PRO" id="PR:Q9P7W8"/>
<dbReference type="Proteomes" id="UP000002485">
    <property type="component" value="Chromosome II"/>
</dbReference>
<dbReference type="GO" id="GO:0000785">
    <property type="term" value="C:chromatin"/>
    <property type="evidence" value="ECO:0000303"/>
    <property type="project" value="ComplexPortal"/>
</dbReference>
<dbReference type="GO" id="GO:0005829">
    <property type="term" value="C:cytosol"/>
    <property type="evidence" value="ECO:0007005"/>
    <property type="project" value="PomBase"/>
</dbReference>
<dbReference type="GO" id="GO:0005634">
    <property type="term" value="C:nucleus"/>
    <property type="evidence" value="ECO:0007005"/>
    <property type="project" value="PomBase"/>
</dbReference>
<dbReference type="GO" id="GO:0016586">
    <property type="term" value="C:RSC-type complex"/>
    <property type="evidence" value="ECO:0000314"/>
    <property type="project" value="PomBase"/>
</dbReference>
<dbReference type="GO" id="GO:0003677">
    <property type="term" value="F:DNA binding"/>
    <property type="evidence" value="ECO:0000318"/>
    <property type="project" value="GO_Central"/>
</dbReference>
<dbReference type="GO" id="GO:0006338">
    <property type="term" value="P:chromatin remodeling"/>
    <property type="evidence" value="ECO:0000318"/>
    <property type="project" value="GO_Central"/>
</dbReference>
<dbReference type="GO" id="GO:0006355">
    <property type="term" value="P:regulation of DNA-templated transcription"/>
    <property type="evidence" value="ECO:0007669"/>
    <property type="project" value="InterPro"/>
</dbReference>
<dbReference type="GO" id="GO:0045815">
    <property type="term" value="P:transcription initiation-coupled chromatin remodeling"/>
    <property type="evidence" value="ECO:0000305"/>
    <property type="project" value="PomBase"/>
</dbReference>
<dbReference type="CDD" id="cd16100">
    <property type="entry name" value="ARID"/>
    <property type="match status" value="1"/>
</dbReference>
<dbReference type="Gene3D" id="1.10.150.60">
    <property type="entry name" value="ARID DNA-binding domain"/>
    <property type="match status" value="1"/>
</dbReference>
<dbReference type="Gene3D" id="1.25.10.10">
    <property type="entry name" value="Leucine-rich Repeat Variant"/>
    <property type="match status" value="1"/>
</dbReference>
<dbReference type="InterPro" id="IPR001606">
    <property type="entry name" value="ARID_dom"/>
</dbReference>
<dbReference type="InterPro" id="IPR036431">
    <property type="entry name" value="ARID_dom_sf"/>
</dbReference>
<dbReference type="InterPro" id="IPR011989">
    <property type="entry name" value="ARM-like"/>
</dbReference>
<dbReference type="InterPro" id="IPR016024">
    <property type="entry name" value="ARM-type_fold"/>
</dbReference>
<dbReference type="InterPro" id="IPR052406">
    <property type="entry name" value="Chromatin_Remodeling_Comp"/>
</dbReference>
<dbReference type="InterPro" id="IPR003150">
    <property type="entry name" value="DNA-bd_RFX"/>
</dbReference>
<dbReference type="PANTHER" id="PTHR22970">
    <property type="entry name" value="AT-RICH INTERACTIVE DOMAIN-CONTAINING PROTEIN 2"/>
    <property type="match status" value="1"/>
</dbReference>
<dbReference type="PANTHER" id="PTHR22970:SF14">
    <property type="entry name" value="AT-RICH INTERACTIVE DOMAIN-CONTAINING PROTEIN 2"/>
    <property type="match status" value="1"/>
</dbReference>
<dbReference type="Pfam" id="PF01388">
    <property type="entry name" value="ARID"/>
    <property type="match status" value="1"/>
</dbReference>
<dbReference type="SMART" id="SM01014">
    <property type="entry name" value="ARID"/>
    <property type="match status" value="1"/>
</dbReference>
<dbReference type="SMART" id="SM00501">
    <property type="entry name" value="BRIGHT"/>
    <property type="match status" value="1"/>
</dbReference>
<dbReference type="SUPFAM" id="SSF46774">
    <property type="entry name" value="ARID-like"/>
    <property type="match status" value="1"/>
</dbReference>
<dbReference type="SUPFAM" id="SSF48371">
    <property type="entry name" value="ARM repeat"/>
    <property type="match status" value="1"/>
</dbReference>
<dbReference type="PROSITE" id="PS51011">
    <property type="entry name" value="ARID"/>
    <property type="match status" value="1"/>
</dbReference>
<dbReference type="PROSITE" id="PS51526">
    <property type="entry name" value="RFX_DBD"/>
    <property type="match status" value="1"/>
</dbReference>
<keyword id="KW-0156">Chromatin regulator</keyword>
<keyword id="KW-0963">Cytoplasm</keyword>
<keyword id="KW-0238">DNA-binding</keyword>
<keyword id="KW-0539">Nucleus</keyword>
<keyword id="KW-0597">Phosphoprotein</keyword>
<keyword id="KW-1185">Reference proteome</keyword>
<keyword id="KW-0804">Transcription</keyword>
<keyword id="KW-0805">Transcription regulation</keyword>
<gene>
    <name type="primary">rsc9</name>
    <name type="ORF">SPBC1703.02</name>
</gene>
<feature type="chain" id="PRO_0000318104" description="Chromatin structure-remodeling complex subunit rsc9">
    <location>
        <begin position="1"/>
        <end position="780"/>
    </location>
</feature>
<feature type="domain" description="ARID" evidence="2">
    <location>
        <begin position="20"/>
        <end position="112"/>
    </location>
</feature>
<feature type="DNA-binding region" description="RFX-type winged-helix" evidence="3">
    <location>
        <begin position="530"/>
        <end position="609"/>
    </location>
</feature>
<feature type="modified residue" description="Phosphothreonine" evidence="5">
    <location>
        <position position="230"/>
    </location>
</feature>
<feature type="modified residue" description="Phosphoserine" evidence="1">
    <location>
        <position position="696"/>
    </location>
</feature>
<proteinExistence type="evidence at protein level"/>
<sequence>MSQVIQGAVEEPVYSNKSLTNENDSFLSLIESFSQERGVPIDINPKIGRKPILLYELYKKVIKRGGYDAVSATEDGWTNIAEEFNQSDPARSAGILQNVYFKYLISWEIHDHWHLLLPPPSTLELSENRQNVLERVKVFNSCSPPKPTNPITIIDNDKTHSFKKFYKSLVKEDEENGIEKKINEAMNSSASQPLPNSTNFASTTFPSVPFHPLPVDSGLQKYIDRNSNLTPPALGAGVPGPPLLVRVALALKSQQDKEVDWAIGHLIKISFERHQEFKLERLPSLAECLVYSLGFQVTKAKQVSDLTDISLCMDRAIGIALVLRNSVLSVENAKHVAQTKLVISVLEASIRCAKTFNNLEFLHYCLDISEMISSYLHVEDEKNVFYLALCEFLNSSDYSILIATLRTLARLALNDRNNRLLQDLKSNVIANIIALVETDNEEIVAAALDFLYQYTTYRTNTSNLLASQEAWMLVDQLIRLMMYQAQERFMTVTIENSESNPAVKHEATSSISLPMEELQQLVAMREPERSVKWMRCCFEPSSDDYVLQTDIWQLYCSDMERAQGPNVMGISPADFIKVSSHAFYNARAMTVSTPQLPVEYVINGIKRRKFPTSVNGMRYQPCRWCLDSGKECGELLLGTPLLHSHLQEMHIFPQILETGKCRWSDCKYEIQRLTPASELSHYQLLSHIVTHLHDDSLETLVEGRKLSPSREFRIPLLLTAVDDQGDATGIALTATLVLRNLVRSKQGKMLFSAIESRVLEVSSLNPAVAPYVSEMLLGQI</sequence>
<reference key="1">
    <citation type="journal article" date="2002" name="Nature">
        <title>The genome sequence of Schizosaccharomyces pombe.</title>
        <authorList>
            <person name="Wood V."/>
            <person name="Gwilliam R."/>
            <person name="Rajandream M.A."/>
            <person name="Lyne M.H."/>
            <person name="Lyne R."/>
            <person name="Stewart A."/>
            <person name="Sgouros J.G."/>
            <person name="Peat N."/>
            <person name="Hayles J."/>
            <person name="Baker S.G."/>
            <person name="Basham D."/>
            <person name="Bowman S."/>
            <person name="Brooks K."/>
            <person name="Brown D."/>
            <person name="Brown S."/>
            <person name="Chillingworth T."/>
            <person name="Churcher C.M."/>
            <person name="Collins M."/>
            <person name="Connor R."/>
            <person name="Cronin A."/>
            <person name="Davis P."/>
            <person name="Feltwell T."/>
            <person name="Fraser A."/>
            <person name="Gentles S."/>
            <person name="Goble A."/>
            <person name="Hamlin N."/>
            <person name="Harris D.E."/>
            <person name="Hidalgo J."/>
            <person name="Hodgson G."/>
            <person name="Holroyd S."/>
            <person name="Hornsby T."/>
            <person name="Howarth S."/>
            <person name="Huckle E.J."/>
            <person name="Hunt S."/>
            <person name="Jagels K."/>
            <person name="James K.D."/>
            <person name="Jones L."/>
            <person name="Jones M."/>
            <person name="Leather S."/>
            <person name="McDonald S."/>
            <person name="McLean J."/>
            <person name="Mooney P."/>
            <person name="Moule S."/>
            <person name="Mungall K.L."/>
            <person name="Murphy L.D."/>
            <person name="Niblett D."/>
            <person name="Odell C."/>
            <person name="Oliver K."/>
            <person name="O'Neil S."/>
            <person name="Pearson D."/>
            <person name="Quail M.A."/>
            <person name="Rabbinowitsch E."/>
            <person name="Rutherford K.M."/>
            <person name="Rutter S."/>
            <person name="Saunders D."/>
            <person name="Seeger K."/>
            <person name="Sharp S."/>
            <person name="Skelton J."/>
            <person name="Simmonds M.N."/>
            <person name="Squares R."/>
            <person name="Squares S."/>
            <person name="Stevens K."/>
            <person name="Taylor K."/>
            <person name="Taylor R.G."/>
            <person name="Tivey A."/>
            <person name="Walsh S.V."/>
            <person name="Warren T."/>
            <person name="Whitehead S."/>
            <person name="Woodward J.R."/>
            <person name="Volckaert G."/>
            <person name="Aert R."/>
            <person name="Robben J."/>
            <person name="Grymonprez B."/>
            <person name="Weltjens I."/>
            <person name="Vanstreels E."/>
            <person name="Rieger M."/>
            <person name="Schaefer M."/>
            <person name="Mueller-Auer S."/>
            <person name="Gabel C."/>
            <person name="Fuchs M."/>
            <person name="Duesterhoeft A."/>
            <person name="Fritzc C."/>
            <person name="Holzer E."/>
            <person name="Moestl D."/>
            <person name="Hilbert H."/>
            <person name="Borzym K."/>
            <person name="Langer I."/>
            <person name="Beck A."/>
            <person name="Lehrach H."/>
            <person name="Reinhardt R."/>
            <person name="Pohl T.M."/>
            <person name="Eger P."/>
            <person name="Zimmermann W."/>
            <person name="Wedler H."/>
            <person name="Wambutt R."/>
            <person name="Purnelle B."/>
            <person name="Goffeau A."/>
            <person name="Cadieu E."/>
            <person name="Dreano S."/>
            <person name="Gloux S."/>
            <person name="Lelaure V."/>
            <person name="Mottier S."/>
            <person name="Galibert F."/>
            <person name="Aves S.J."/>
            <person name="Xiang Z."/>
            <person name="Hunt C."/>
            <person name="Moore K."/>
            <person name="Hurst S.M."/>
            <person name="Lucas M."/>
            <person name="Rochet M."/>
            <person name="Gaillardin C."/>
            <person name="Tallada V.A."/>
            <person name="Garzon A."/>
            <person name="Thode G."/>
            <person name="Daga R.R."/>
            <person name="Cruzado L."/>
            <person name="Jimenez J."/>
            <person name="Sanchez M."/>
            <person name="del Rey F."/>
            <person name="Benito J."/>
            <person name="Dominguez A."/>
            <person name="Revuelta J.L."/>
            <person name="Moreno S."/>
            <person name="Armstrong J."/>
            <person name="Forsburg S.L."/>
            <person name="Cerutti L."/>
            <person name="Lowe T."/>
            <person name="McCombie W.R."/>
            <person name="Paulsen I."/>
            <person name="Potashkin J."/>
            <person name="Shpakovski G.V."/>
            <person name="Ussery D."/>
            <person name="Barrell B.G."/>
            <person name="Nurse P."/>
        </authorList>
    </citation>
    <scope>NUCLEOTIDE SEQUENCE [LARGE SCALE GENOMIC DNA]</scope>
    <source>
        <strain>972 / ATCC 24843</strain>
    </source>
</reference>
<reference key="2">
    <citation type="journal article" date="2006" name="Nat. Biotechnol.">
        <title>ORFeome cloning and global analysis of protein localization in the fission yeast Schizosaccharomyces pombe.</title>
        <authorList>
            <person name="Matsuyama A."/>
            <person name="Arai R."/>
            <person name="Yashiroda Y."/>
            <person name="Shirai A."/>
            <person name="Kamata A."/>
            <person name="Sekido S."/>
            <person name="Kobayashi Y."/>
            <person name="Hashimoto A."/>
            <person name="Hamamoto M."/>
            <person name="Hiraoka Y."/>
            <person name="Horinouchi S."/>
            <person name="Yoshida M."/>
        </authorList>
    </citation>
    <scope>SUBCELLULAR LOCATION [LARGE SCALE ANALYSIS]</scope>
</reference>
<reference key="3">
    <citation type="journal article" date="2008" name="J. Proteome Res.">
        <title>Phosphoproteome analysis of fission yeast.</title>
        <authorList>
            <person name="Wilson-Grady J.T."/>
            <person name="Villen J."/>
            <person name="Gygi S.P."/>
        </authorList>
    </citation>
    <scope>PHOSPHORYLATION [LARGE SCALE ANALYSIS] AT THR-230</scope>
    <scope>IDENTIFICATION BY MASS SPECTROMETRY</scope>
</reference>
<reference key="4">
    <citation type="journal article" date="2008" name="Nat. Struct. Mol. Biol.">
        <title>Fission yeast SWI/SNF and RSC complexes show compositional and functional differences from budding yeast.</title>
        <authorList>
            <person name="Monahan B.J."/>
            <person name="Villen J."/>
            <person name="Marguerat S."/>
            <person name="Baehler J."/>
            <person name="Gygi S.P."/>
            <person name="Winston F."/>
        </authorList>
    </citation>
    <scope>IDENTIFICATION IN THE RSC COMPLEX</scope>
    <scope>FUNCTION OF THE RSC COMPLEX</scope>
    <scope>IDENTIFICATION BY MASS SPECTROMETRY</scope>
</reference>
<evidence type="ECO:0000250" key="1"/>
<evidence type="ECO:0000255" key="2">
    <source>
        <dbReference type="PROSITE-ProRule" id="PRU00355"/>
    </source>
</evidence>
<evidence type="ECO:0000255" key="3">
    <source>
        <dbReference type="PROSITE-ProRule" id="PRU00858"/>
    </source>
</evidence>
<evidence type="ECO:0000269" key="4">
    <source>
    </source>
</evidence>
<evidence type="ECO:0000269" key="5">
    <source>
    </source>
</evidence>
<evidence type="ECO:0000269" key="6">
    <source>
    </source>
</evidence>
<evidence type="ECO:0000305" key="7"/>
<comment type="function">
    <text evidence="6">Component of the chromatin structure remodeling complex (RSC), which is involved in transcription regulation and nucleosome positioning. Controls particularly membrane and organelle development genes.</text>
</comment>
<comment type="subunit">
    <text evidence="1">Component of the RSC complex composed of at least arp9, arp42, rsc1, rsc4, rsc7, rsc9, rsc58, sfh1, snf21, ssr1, ssr2, ssr3 and ssr4. The complex interacts with histone and histone variant components of centromeric chromatin (By similarity).</text>
</comment>
<comment type="subcellular location">
    <subcellularLocation>
        <location evidence="4">Cytoplasm</location>
    </subcellularLocation>
    <subcellularLocation>
        <location evidence="2 3 4">Nucleus</location>
    </subcellularLocation>
</comment>
<comment type="similarity">
    <text evidence="7">Belongs to the RSC9 family.</text>
</comment>